<comment type="function">
    <text evidence="1">This protein is involved in the repair of mismatches in DNA. It is required for dam-dependent methyl-directed DNA mismatch repair. May act as a 'molecular matchmaker', a protein that promotes the formation of a stable complex between two or more DNA-binding proteins in an ATP-dependent manner without itself being part of a final effector complex.</text>
</comment>
<comment type="similarity">
    <text evidence="1">Belongs to the DNA mismatch repair MutL/HexB family.</text>
</comment>
<dbReference type="EMBL" id="CP000469">
    <property type="protein sequence ID" value="ABK46834.1"/>
    <property type="molecule type" value="Genomic_DNA"/>
</dbReference>
<dbReference type="RefSeq" id="WP_011715787.1">
    <property type="nucleotide sequence ID" value="NC_008577.1"/>
</dbReference>
<dbReference type="SMR" id="A0KSR5"/>
<dbReference type="STRING" id="94122.Shewana3_0595"/>
<dbReference type="KEGG" id="shn:Shewana3_0595"/>
<dbReference type="eggNOG" id="COG0323">
    <property type="taxonomic scope" value="Bacteria"/>
</dbReference>
<dbReference type="HOGENOM" id="CLU_004131_4_2_6"/>
<dbReference type="OrthoDB" id="9763467at2"/>
<dbReference type="Proteomes" id="UP000002589">
    <property type="component" value="Chromosome"/>
</dbReference>
<dbReference type="GO" id="GO:0032300">
    <property type="term" value="C:mismatch repair complex"/>
    <property type="evidence" value="ECO:0007669"/>
    <property type="project" value="InterPro"/>
</dbReference>
<dbReference type="GO" id="GO:0005524">
    <property type="term" value="F:ATP binding"/>
    <property type="evidence" value="ECO:0007669"/>
    <property type="project" value="InterPro"/>
</dbReference>
<dbReference type="GO" id="GO:0016887">
    <property type="term" value="F:ATP hydrolysis activity"/>
    <property type="evidence" value="ECO:0007669"/>
    <property type="project" value="InterPro"/>
</dbReference>
<dbReference type="GO" id="GO:0140664">
    <property type="term" value="F:ATP-dependent DNA damage sensor activity"/>
    <property type="evidence" value="ECO:0007669"/>
    <property type="project" value="InterPro"/>
</dbReference>
<dbReference type="GO" id="GO:0030983">
    <property type="term" value="F:mismatched DNA binding"/>
    <property type="evidence" value="ECO:0007669"/>
    <property type="project" value="InterPro"/>
</dbReference>
<dbReference type="GO" id="GO:0006298">
    <property type="term" value="P:mismatch repair"/>
    <property type="evidence" value="ECO:0007669"/>
    <property type="project" value="UniProtKB-UniRule"/>
</dbReference>
<dbReference type="CDD" id="cd16926">
    <property type="entry name" value="HATPase_MutL-MLH-PMS-like"/>
    <property type="match status" value="1"/>
</dbReference>
<dbReference type="CDD" id="cd03482">
    <property type="entry name" value="MutL_Trans_MutL"/>
    <property type="match status" value="1"/>
</dbReference>
<dbReference type="FunFam" id="3.30.230.10:FF:000013">
    <property type="entry name" value="DNA mismatch repair endonuclease MutL"/>
    <property type="match status" value="1"/>
</dbReference>
<dbReference type="FunFam" id="3.30.565.10:FF:000003">
    <property type="entry name" value="DNA mismatch repair endonuclease MutL"/>
    <property type="match status" value="1"/>
</dbReference>
<dbReference type="Gene3D" id="3.30.230.10">
    <property type="match status" value="1"/>
</dbReference>
<dbReference type="Gene3D" id="3.30.565.10">
    <property type="entry name" value="Histidine kinase-like ATPase, C-terminal domain"/>
    <property type="match status" value="1"/>
</dbReference>
<dbReference type="Gene3D" id="3.30.1370.100">
    <property type="entry name" value="MutL, C-terminal domain, regulatory subdomain"/>
    <property type="match status" value="1"/>
</dbReference>
<dbReference type="HAMAP" id="MF_00149">
    <property type="entry name" value="DNA_mis_repair"/>
    <property type="match status" value="1"/>
</dbReference>
<dbReference type="InterPro" id="IPR014762">
    <property type="entry name" value="DNA_mismatch_repair_CS"/>
</dbReference>
<dbReference type="InterPro" id="IPR020667">
    <property type="entry name" value="DNA_mismatch_repair_MutL"/>
</dbReference>
<dbReference type="InterPro" id="IPR013507">
    <property type="entry name" value="DNA_mismatch_S5_2-like"/>
</dbReference>
<dbReference type="InterPro" id="IPR036890">
    <property type="entry name" value="HATPase_C_sf"/>
</dbReference>
<dbReference type="InterPro" id="IPR002099">
    <property type="entry name" value="MutL/Mlh/PMS"/>
</dbReference>
<dbReference type="InterPro" id="IPR038973">
    <property type="entry name" value="MutL/Mlh/Pms-like"/>
</dbReference>
<dbReference type="InterPro" id="IPR014790">
    <property type="entry name" value="MutL_C"/>
</dbReference>
<dbReference type="InterPro" id="IPR042121">
    <property type="entry name" value="MutL_C_regsub"/>
</dbReference>
<dbReference type="InterPro" id="IPR037198">
    <property type="entry name" value="MutL_C_sf"/>
</dbReference>
<dbReference type="InterPro" id="IPR020568">
    <property type="entry name" value="Ribosomal_Su5_D2-typ_SF"/>
</dbReference>
<dbReference type="InterPro" id="IPR014721">
    <property type="entry name" value="Ribsml_uS5_D2-typ_fold_subgr"/>
</dbReference>
<dbReference type="NCBIfam" id="TIGR00585">
    <property type="entry name" value="mutl"/>
    <property type="match status" value="1"/>
</dbReference>
<dbReference type="NCBIfam" id="NF000948">
    <property type="entry name" value="PRK00095.1-1"/>
    <property type="match status" value="1"/>
</dbReference>
<dbReference type="PANTHER" id="PTHR10073">
    <property type="entry name" value="DNA MISMATCH REPAIR PROTEIN MLH, PMS, MUTL"/>
    <property type="match status" value="1"/>
</dbReference>
<dbReference type="PANTHER" id="PTHR10073:SF12">
    <property type="entry name" value="DNA MISMATCH REPAIR PROTEIN MLH1"/>
    <property type="match status" value="1"/>
</dbReference>
<dbReference type="Pfam" id="PF01119">
    <property type="entry name" value="DNA_mis_repair"/>
    <property type="match status" value="1"/>
</dbReference>
<dbReference type="Pfam" id="PF13589">
    <property type="entry name" value="HATPase_c_3"/>
    <property type="match status" value="1"/>
</dbReference>
<dbReference type="Pfam" id="PF08676">
    <property type="entry name" value="MutL_C"/>
    <property type="match status" value="1"/>
</dbReference>
<dbReference type="SMART" id="SM01340">
    <property type="entry name" value="DNA_mis_repair"/>
    <property type="match status" value="1"/>
</dbReference>
<dbReference type="SMART" id="SM00853">
    <property type="entry name" value="MutL_C"/>
    <property type="match status" value="1"/>
</dbReference>
<dbReference type="SUPFAM" id="SSF55874">
    <property type="entry name" value="ATPase domain of HSP90 chaperone/DNA topoisomerase II/histidine kinase"/>
    <property type="match status" value="1"/>
</dbReference>
<dbReference type="SUPFAM" id="SSF118116">
    <property type="entry name" value="DNA mismatch repair protein MutL"/>
    <property type="match status" value="1"/>
</dbReference>
<dbReference type="SUPFAM" id="SSF54211">
    <property type="entry name" value="Ribosomal protein S5 domain 2-like"/>
    <property type="match status" value="1"/>
</dbReference>
<dbReference type="PROSITE" id="PS00058">
    <property type="entry name" value="DNA_MISMATCH_REPAIR_1"/>
    <property type="match status" value="1"/>
</dbReference>
<proteinExistence type="inferred from homology"/>
<keyword id="KW-0227">DNA damage</keyword>
<keyword id="KW-0234">DNA repair</keyword>
<protein>
    <recommendedName>
        <fullName evidence="1">DNA mismatch repair protein MutL</fullName>
    </recommendedName>
</protein>
<feature type="chain" id="PRO_1000076717" description="DNA mismatch repair protein MutL">
    <location>
        <begin position="1"/>
        <end position="648"/>
    </location>
</feature>
<feature type="region of interest" description="Disordered" evidence="2">
    <location>
        <begin position="336"/>
        <end position="443"/>
    </location>
</feature>
<feature type="compositionally biased region" description="Polar residues" evidence="2">
    <location>
        <begin position="370"/>
        <end position="381"/>
    </location>
</feature>
<feature type="compositionally biased region" description="Basic and acidic residues" evidence="2">
    <location>
        <begin position="383"/>
        <end position="410"/>
    </location>
</feature>
<evidence type="ECO:0000255" key="1">
    <source>
        <dbReference type="HAMAP-Rule" id="MF_00149"/>
    </source>
</evidence>
<evidence type="ECO:0000256" key="2">
    <source>
        <dbReference type="SAM" id="MobiDB-lite"/>
    </source>
</evidence>
<sequence>MGIQILPPQLANQIAAGEVVERPASVVKELVENSLDAGATRIDIEIDKGGSKLIKIRDNGSGIPKDELALALSRHATSKLHSLDDLEAILSFGFRGEALASISSVSRLTLTSRTAEQTEAWQAYAEGADMAVKVMPAAHPVGSTIEVVDLFFNTPARRRFLKSDKTEFTHIDEWLKRIALVRGDIHFTLTHNGKIVRNCRPAMNEPQYLQRLTQVAGRQFADEALRVECQHDDLRLSGYLQSPWSTVLTDTHYFYVNGRLVRDRLVNHAVRQAFAQKAEVEQPGYVLMLDIDPHQVDVNVHPAKHEVRFHQSRYVHDYILQALQSALEEAGELGFERPFEPSSPQIRDEASLSETGAQTQTEHHAFELQSPESKTHSTWNEASRVDTSRAETSRESRIDSPLGERTRDIASARPYAGVQSNAYGSMAVPRESRSGSAGESRARAELPSKVAIASYGELLQTPSYSVQDKPYQPVLAMPAILNGQYWVLAQGQNLSLLPIQSVALATRSHEVETKLATGLIGQPLLMPVSIAADTDWPALLEEHETLIRQLGLELTIRYQQLIIKKVPPYLRDSQLAKVIPEWLQSLRFEAPAPNALAVWLAEQSLTGFTSAADIWAAYCQLTEEKRQQIADKAVSLPWQSWLEEQASE</sequence>
<organism>
    <name type="scientific">Shewanella sp. (strain ANA-3)</name>
    <dbReference type="NCBI Taxonomy" id="94122"/>
    <lineage>
        <taxon>Bacteria</taxon>
        <taxon>Pseudomonadati</taxon>
        <taxon>Pseudomonadota</taxon>
        <taxon>Gammaproteobacteria</taxon>
        <taxon>Alteromonadales</taxon>
        <taxon>Shewanellaceae</taxon>
        <taxon>Shewanella</taxon>
    </lineage>
</organism>
<gene>
    <name evidence="1" type="primary">mutL</name>
    <name type="ordered locus">Shewana3_0595</name>
</gene>
<accession>A0KSR5</accession>
<reference key="1">
    <citation type="submission" date="2006-09" db="EMBL/GenBank/DDBJ databases">
        <title>Complete sequence of chromosome 1 of Shewanella sp. ANA-3.</title>
        <authorList>
            <person name="Copeland A."/>
            <person name="Lucas S."/>
            <person name="Lapidus A."/>
            <person name="Barry K."/>
            <person name="Detter J.C."/>
            <person name="Glavina del Rio T."/>
            <person name="Hammon N."/>
            <person name="Israni S."/>
            <person name="Dalin E."/>
            <person name="Tice H."/>
            <person name="Pitluck S."/>
            <person name="Chertkov O."/>
            <person name="Brettin T."/>
            <person name="Bruce D."/>
            <person name="Han C."/>
            <person name="Tapia R."/>
            <person name="Gilna P."/>
            <person name="Schmutz J."/>
            <person name="Larimer F."/>
            <person name="Land M."/>
            <person name="Hauser L."/>
            <person name="Kyrpides N."/>
            <person name="Kim E."/>
            <person name="Newman D."/>
            <person name="Salticov C."/>
            <person name="Konstantinidis K."/>
            <person name="Klappenback J."/>
            <person name="Tiedje J."/>
            <person name="Richardson P."/>
        </authorList>
    </citation>
    <scope>NUCLEOTIDE SEQUENCE [LARGE SCALE GENOMIC DNA]</scope>
    <source>
        <strain>ANA-3</strain>
    </source>
</reference>
<name>MUTL_SHESA</name>